<protein>
    <recommendedName>
        <fullName evidence="1">UPF0102 protein BPSL3274</fullName>
    </recommendedName>
</protein>
<gene>
    <name type="ordered locus">BPSL3274</name>
</gene>
<reference key="1">
    <citation type="journal article" date="2004" name="Proc. Natl. Acad. Sci. U.S.A.">
        <title>Genomic plasticity of the causative agent of melioidosis, Burkholderia pseudomallei.</title>
        <authorList>
            <person name="Holden M.T.G."/>
            <person name="Titball R.W."/>
            <person name="Peacock S.J."/>
            <person name="Cerdeno-Tarraga A.-M."/>
            <person name="Atkins T."/>
            <person name="Crossman L.C."/>
            <person name="Pitt T."/>
            <person name="Churcher C."/>
            <person name="Mungall K.L."/>
            <person name="Bentley S.D."/>
            <person name="Sebaihia M."/>
            <person name="Thomson N.R."/>
            <person name="Bason N."/>
            <person name="Beacham I.R."/>
            <person name="Brooks K."/>
            <person name="Brown K.A."/>
            <person name="Brown N.F."/>
            <person name="Challis G.L."/>
            <person name="Cherevach I."/>
            <person name="Chillingworth T."/>
            <person name="Cronin A."/>
            <person name="Crossett B."/>
            <person name="Davis P."/>
            <person name="DeShazer D."/>
            <person name="Feltwell T."/>
            <person name="Fraser A."/>
            <person name="Hance Z."/>
            <person name="Hauser H."/>
            <person name="Holroyd S."/>
            <person name="Jagels K."/>
            <person name="Keith K.E."/>
            <person name="Maddison M."/>
            <person name="Moule S."/>
            <person name="Price C."/>
            <person name="Quail M.A."/>
            <person name="Rabbinowitsch E."/>
            <person name="Rutherford K."/>
            <person name="Sanders M."/>
            <person name="Simmonds M."/>
            <person name="Songsivilai S."/>
            <person name="Stevens K."/>
            <person name="Tumapa S."/>
            <person name="Vesaratchavest M."/>
            <person name="Whitehead S."/>
            <person name="Yeats C."/>
            <person name="Barrell B.G."/>
            <person name="Oyston P.C.F."/>
            <person name="Parkhill J."/>
        </authorList>
    </citation>
    <scope>NUCLEOTIDE SEQUENCE [LARGE SCALE GENOMIC DNA]</scope>
    <source>
        <strain>K96243</strain>
    </source>
</reference>
<feature type="chain" id="PRO_0000336144" description="UPF0102 protein BPSL3274">
    <location>
        <begin position="1"/>
        <end position="144"/>
    </location>
</feature>
<feature type="region of interest" description="Disordered" evidence="2">
    <location>
        <begin position="1"/>
        <end position="28"/>
    </location>
</feature>
<feature type="compositionally biased region" description="Basic and acidic residues" evidence="2">
    <location>
        <begin position="16"/>
        <end position="28"/>
    </location>
</feature>
<organism>
    <name type="scientific">Burkholderia pseudomallei (strain K96243)</name>
    <dbReference type="NCBI Taxonomy" id="272560"/>
    <lineage>
        <taxon>Bacteria</taxon>
        <taxon>Pseudomonadati</taxon>
        <taxon>Pseudomonadota</taxon>
        <taxon>Betaproteobacteria</taxon>
        <taxon>Burkholderiales</taxon>
        <taxon>Burkholderiaceae</taxon>
        <taxon>Burkholderia</taxon>
        <taxon>pseudomallei group</taxon>
    </lineage>
</organism>
<comment type="similarity">
    <text evidence="1">Belongs to the UPF0102 family.</text>
</comment>
<name>Y3274_BURPS</name>
<sequence length="144" mass="15573">MCHAREASPGTGEPEAAPRDNFPREAGSKRGIGAAFETRAQRFLERAGLALVARNVTVRGGEIDLVMRERDGTLVFVEVRARANSRYGGAAASIGARKRMRLLLAAHAFWARTGGANACRFDVVAFEGGRLVWLRDAFRADDAG</sequence>
<evidence type="ECO:0000255" key="1">
    <source>
        <dbReference type="HAMAP-Rule" id="MF_00048"/>
    </source>
</evidence>
<evidence type="ECO:0000256" key="2">
    <source>
        <dbReference type="SAM" id="MobiDB-lite"/>
    </source>
</evidence>
<dbReference type="EMBL" id="BX571965">
    <property type="protein sequence ID" value="CAH37287.1"/>
    <property type="molecule type" value="Genomic_DNA"/>
</dbReference>
<dbReference type="RefSeq" id="WP_004525681.1">
    <property type="nucleotide sequence ID" value="NZ_CP009538.1"/>
</dbReference>
<dbReference type="RefSeq" id="YP_109870.1">
    <property type="nucleotide sequence ID" value="NC_006350.1"/>
</dbReference>
<dbReference type="SMR" id="Q63PU8"/>
<dbReference type="STRING" id="272560.BPSL3274"/>
<dbReference type="KEGG" id="bps:BPSL3274"/>
<dbReference type="PATRIC" id="fig|272560.51.peg.1949"/>
<dbReference type="eggNOG" id="COG0792">
    <property type="taxonomic scope" value="Bacteria"/>
</dbReference>
<dbReference type="Proteomes" id="UP000000605">
    <property type="component" value="Chromosome 1"/>
</dbReference>
<dbReference type="GO" id="GO:0003676">
    <property type="term" value="F:nucleic acid binding"/>
    <property type="evidence" value="ECO:0007669"/>
    <property type="project" value="InterPro"/>
</dbReference>
<dbReference type="Gene3D" id="3.40.1350.10">
    <property type="match status" value="1"/>
</dbReference>
<dbReference type="HAMAP" id="MF_00048">
    <property type="entry name" value="UPF0102"/>
    <property type="match status" value="1"/>
</dbReference>
<dbReference type="InterPro" id="IPR011335">
    <property type="entry name" value="Restrct_endonuc-II-like"/>
</dbReference>
<dbReference type="InterPro" id="IPR011856">
    <property type="entry name" value="tRNA_endonuc-like_dom_sf"/>
</dbReference>
<dbReference type="InterPro" id="IPR003509">
    <property type="entry name" value="UPF0102_YraN-like"/>
</dbReference>
<dbReference type="NCBIfam" id="NF009150">
    <property type="entry name" value="PRK12497.1-3"/>
    <property type="match status" value="1"/>
</dbReference>
<dbReference type="NCBIfam" id="TIGR00252">
    <property type="entry name" value="YraN family protein"/>
    <property type="match status" value="1"/>
</dbReference>
<dbReference type="PANTHER" id="PTHR34039">
    <property type="entry name" value="UPF0102 PROTEIN YRAN"/>
    <property type="match status" value="1"/>
</dbReference>
<dbReference type="PANTHER" id="PTHR34039:SF1">
    <property type="entry name" value="UPF0102 PROTEIN YRAN"/>
    <property type="match status" value="1"/>
</dbReference>
<dbReference type="Pfam" id="PF02021">
    <property type="entry name" value="UPF0102"/>
    <property type="match status" value="1"/>
</dbReference>
<dbReference type="SUPFAM" id="SSF52980">
    <property type="entry name" value="Restriction endonuclease-like"/>
    <property type="match status" value="1"/>
</dbReference>
<accession>Q63PU8</accession>
<keyword id="KW-1185">Reference proteome</keyword>
<proteinExistence type="inferred from homology"/>